<feature type="chain" id="PRO_1000198887" description="Arginine--tRNA ligase">
    <location>
        <begin position="1"/>
        <end position="566"/>
    </location>
</feature>
<feature type="short sequence motif" description="'HIGH' region">
    <location>
        <begin position="123"/>
        <end position="133"/>
    </location>
</feature>
<organism>
    <name type="scientific">Clostridioides difficile (strain 630)</name>
    <name type="common">Peptoclostridium difficile</name>
    <dbReference type="NCBI Taxonomy" id="272563"/>
    <lineage>
        <taxon>Bacteria</taxon>
        <taxon>Bacillati</taxon>
        <taxon>Bacillota</taxon>
        <taxon>Clostridia</taxon>
        <taxon>Peptostreptococcales</taxon>
        <taxon>Peptostreptococcaceae</taxon>
        <taxon>Clostridioides</taxon>
    </lineage>
</organism>
<sequence>MQDFKVAISNCLKEKIEDLSKEEIEALIEVPPNKDMGDYAFPCFKLAKVFRKAPNMIASELAESIEPSGEITKVIQLGGYVNFFVNKSQLAETVIKKVLDEKENYGHSDFGKDKTVIVEYSSPNIAKPFHIGHIRTTVIGNALYKIYDSQGYKTIRINHLGDYGTQFGKLIVAFKKWGEKEVVESNPIPELLKLYVRFHDEAEQHPEMEDEARAWFNKLENGDEEAQELWQWFRNESLKEFNRVYKLLDIEFDSLAGESFYSDKMNRVIELLEEKNLLKESKGARIVDLEEYKMPPALITKNDGSTLYMTRDLAAAIYRKETYDFDKCIYVVGSQQNLHFQQWFKVIELMGYDWAKDLIHVGFGMVALEEGTMSTRKGRVVFLEDALNQAIDKTKEIILAKNPNAKNVDEISKQVGVGAVVFQELSNSRIKDYTFSWERTLSFDGETGPYVQYTHARCCAVLRKAEVEVTSDIDYSLLADEDSAEVLRVIESFNKNILLALKKNEPHIVTRFMLDLAQAFNKFYHDNPILVENLEIRKARLALVLATKQTLENSLKLLGMHAPERM</sequence>
<accession>Q189Q7</accession>
<protein>
    <recommendedName>
        <fullName evidence="1">Arginine--tRNA ligase</fullName>
        <ecNumber evidence="1">6.1.1.19</ecNumber>
    </recommendedName>
    <alternativeName>
        <fullName evidence="1">Arginyl-tRNA synthetase</fullName>
        <shortName evidence="1">ArgRS</shortName>
    </alternativeName>
</protein>
<comment type="catalytic activity">
    <reaction evidence="1">
        <text>tRNA(Arg) + L-arginine + ATP = L-arginyl-tRNA(Arg) + AMP + diphosphate</text>
        <dbReference type="Rhea" id="RHEA:20301"/>
        <dbReference type="Rhea" id="RHEA-COMP:9658"/>
        <dbReference type="Rhea" id="RHEA-COMP:9673"/>
        <dbReference type="ChEBI" id="CHEBI:30616"/>
        <dbReference type="ChEBI" id="CHEBI:32682"/>
        <dbReference type="ChEBI" id="CHEBI:33019"/>
        <dbReference type="ChEBI" id="CHEBI:78442"/>
        <dbReference type="ChEBI" id="CHEBI:78513"/>
        <dbReference type="ChEBI" id="CHEBI:456215"/>
        <dbReference type="EC" id="6.1.1.19"/>
    </reaction>
</comment>
<comment type="subunit">
    <text evidence="1">Monomer.</text>
</comment>
<comment type="subcellular location">
    <subcellularLocation>
        <location evidence="1">Cytoplasm</location>
    </subcellularLocation>
</comment>
<comment type="similarity">
    <text evidence="1">Belongs to the class-I aminoacyl-tRNA synthetase family.</text>
</comment>
<evidence type="ECO:0000255" key="1">
    <source>
        <dbReference type="HAMAP-Rule" id="MF_00123"/>
    </source>
</evidence>
<proteinExistence type="inferred from homology"/>
<gene>
    <name evidence="1" type="primary">argS</name>
    <name type="ordered locus">CD630_07110</name>
</gene>
<keyword id="KW-0030">Aminoacyl-tRNA synthetase</keyword>
<keyword id="KW-0067">ATP-binding</keyword>
<keyword id="KW-0963">Cytoplasm</keyword>
<keyword id="KW-0436">Ligase</keyword>
<keyword id="KW-0547">Nucleotide-binding</keyword>
<keyword id="KW-0648">Protein biosynthesis</keyword>
<keyword id="KW-1185">Reference proteome</keyword>
<name>SYR_CLOD6</name>
<dbReference type="EC" id="6.1.1.19" evidence="1"/>
<dbReference type="EMBL" id="AM180355">
    <property type="protein sequence ID" value="CAJ67544.1"/>
    <property type="molecule type" value="Genomic_DNA"/>
</dbReference>
<dbReference type="RefSeq" id="WP_003436885.1">
    <property type="nucleotide sequence ID" value="NZ_JAUPES010000005.1"/>
</dbReference>
<dbReference type="RefSeq" id="YP_001087187.1">
    <property type="nucleotide sequence ID" value="NC_009089.1"/>
</dbReference>
<dbReference type="SMR" id="Q189Q7"/>
<dbReference type="STRING" id="272563.CD630_07110"/>
<dbReference type="EnsemblBacteria" id="CAJ67544">
    <property type="protein sequence ID" value="CAJ67544"/>
    <property type="gene ID" value="CD630_07110"/>
</dbReference>
<dbReference type="GeneID" id="66353213"/>
<dbReference type="KEGG" id="cdf:CD630_07110"/>
<dbReference type="KEGG" id="pdc:CDIF630_00826"/>
<dbReference type="PATRIC" id="fig|272563.120.peg.731"/>
<dbReference type="eggNOG" id="COG0018">
    <property type="taxonomic scope" value="Bacteria"/>
</dbReference>
<dbReference type="OrthoDB" id="9805987at2"/>
<dbReference type="PhylomeDB" id="Q189Q7"/>
<dbReference type="BioCyc" id="PDIF272563:G12WB-821-MONOMER"/>
<dbReference type="Proteomes" id="UP000001978">
    <property type="component" value="Chromosome"/>
</dbReference>
<dbReference type="GO" id="GO:0005737">
    <property type="term" value="C:cytoplasm"/>
    <property type="evidence" value="ECO:0007669"/>
    <property type="project" value="UniProtKB-SubCell"/>
</dbReference>
<dbReference type="GO" id="GO:0004814">
    <property type="term" value="F:arginine-tRNA ligase activity"/>
    <property type="evidence" value="ECO:0007669"/>
    <property type="project" value="UniProtKB-UniRule"/>
</dbReference>
<dbReference type="GO" id="GO:0005524">
    <property type="term" value="F:ATP binding"/>
    <property type="evidence" value="ECO:0007669"/>
    <property type="project" value="UniProtKB-UniRule"/>
</dbReference>
<dbReference type="GO" id="GO:0006420">
    <property type="term" value="P:arginyl-tRNA aminoacylation"/>
    <property type="evidence" value="ECO:0007669"/>
    <property type="project" value="UniProtKB-UniRule"/>
</dbReference>
<dbReference type="CDD" id="cd07956">
    <property type="entry name" value="Anticodon_Ia_Arg"/>
    <property type="match status" value="1"/>
</dbReference>
<dbReference type="CDD" id="cd00671">
    <property type="entry name" value="ArgRS_core"/>
    <property type="match status" value="1"/>
</dbReference>
<dbReference type="FunFam" id="1.10.730.10:FF:000008">
    <property type="entry name" value="Arginine--tRNA ligase"/>
    <property type="match status" value="1"/>
</dbReference>
<dbReference type="FunFam" id="3.40.50.620:FF:000116">
    <property type="entry name" value="Arginine--tRNA ligase"/>
    <property type="match status" value="1"/>
</dbReference>
<dbReference type="Gene3D" id="3.30.1360.70">
    <property type="entry name" value="Arginyl tRNA synthetase N-terminal domain"/>
    <property type="match status" value="1"/>
</dbReference>
<dbReference type="Gene3D" id="3.40.50.620">
    <property type="entry name" value="HUPs"/>
    <property type="match status" value="1"/>
</dbReference>
<dbReference type="Gene3D" id="1.10.730.10">
    <property type="entry name" value="Isoleucyl-tRNA Synthetase, Domain 1"/>
    <property type="match status" value="1"/>
</dbReference>
<dbReference type="HAMAP" id="MF_00123">
    <property type="entry name" value="Arg_tRNA_synth"/>
    <property type="match status" value="1"/>
</dbReference>
<dbReference type="InterPro" id="IPR001412">
    <property type="entry name" value="aa-tRNA-synth_I_CS"/>
</dbReference>
<dbReference type="InterPro" id="IPR001278">
    <property type="entry name" value="Arg-tRNA-ligase"/>
</dbReference>
<dbReference type="InterPro" id="IPR005148">
    <property type="entry name" value="Arg-tRNA-synth_N"/>
</dbReference>
<dbReference type="InterPro" id="IPR036695">
    <property type="entry name" value="Arg-tRNA-synth_N_sf"/>
</dbReference>
<dbReference type="InterPro" id="IPR035684">
    <property type="entry name" value="ArgRS_core"/>
</dbReference>
<dbReference type="InterPro" id="IPR008909">
    <property type="entry name" value="DALR_anticod-bd"/>
</dbReference>
<dbReference type="InterPro" id="IPR014729">
    <property type="entry name" value="Rossmann-like_a/b/a_fold"/>
</dbReference>
<dbReference type="InterPro" id="IPR009080">
    <property type="entry name" value="tRNAsynth_Ia_anticodon-bd"/>
</dbReference>
<dbReference type="NCBIfam" id="TIGR00456">
    <property type="entry name" value="argS"/>
    <property type="match status" value="1"/>
</dbReference>
<dbReference type="PANTHER" id="PTHR11956:SF5">
    <property type="entry name" value="ARGININE--TRNA LIGASE, CYTOPLASMIC"/>
    <property type="match status" value="1"/>
</dbReference>
<dbReference type="PANTHER" id="PTHR11956">
    <property type="entry name" value="ARGINYL-TRNA SYNTHETASE"/>
    <property type="match status" value="1"/>
</dbReference>
<dbReference type="Pfam" id="PF03485">
    <property type="entry name" value="Arg_tRNA_synt_N"/>
    <property type="match status" value="1"/>
</dbReference>
<dbReference type="Pfam" id="PF05746">
    <property type="entry name" value="DALR_1"/>
    <property type="match status" value="1"/>
</dbReference>
<dbReference type="Pfam" id="PF00750">
    <property type="entry name" value="tRNA-synt_1d"/>
    <property type="match status" value="1"/>
</dbReference>
<dbReference type="PRINTS" id="PR01038">
    <property type="entry name" value="TRNASYNTHARG"/>
</dbReference>
<dbReference type="SMART" id="SM01016">
    <property type="entry name" value="Arg_tRNA_synt_N"/>
    <property type="match status" value="1"/>
</dbReference>
<dbReference type="SMART" id="SM00836">
    <property type="entry name" value="DALR_1"/>
    <property type="match status" value="1"/>
</dbReference>
<dbReference type="SUPFAM" id="SSF47323">
    <property type="entry name" value="Anticodon-binding domain of a subclass of class I aminoacyl-tRNA synthetases"/>
    <property type="match status" value="1"/>
</dbReference>
<dbReference type="SUPFAM" id="SSF55190">
    <property type="entry name" value="Arginyl-tRNA synthetase (ArgRS), N-terminal 'additional' domain"/>
    <property type="match status" value="1"/>
</dbReference>
<dbReference type="SUPFAM" id="SSF52374">
    <property type="entry name" value="Nucleotidylyl transferase"/>
    <property type="match status" value="1"/>
</dbReference>
<dbReference type="PROSITE" id="PS00178">
    <property type="entry name" value="AA_TRNA_LIGASE_I"/>
    <property type="match status" value="1"/>
</dbReference>
<reference key="1">
    <citation type="journal article" date="2006" name="Nat. Genet.">
        <title>The multidrug-resistant human pathogen Clostridium difficile has a highly mobile, mosaic genome.</title>
        <authorList>
            <person name="Sebaihia M."/>
            <person name="Wren B.W."/>
            <person name="Mullany P."/>
            <person name="Fairweather N.F."/>
            <person name="Minton N."/>
            <person name="Stabler R."/>
            <person name="Thomson N.R."/>
            <person name="Roberts A.P."/>
            <person name="Cerdeno-Tarraga A.M."/>
            <person name="Wang H."/>
            <person name="Holden M.T.G."/>
            <person name="Wright A."/>
            <person name="Churcher C."/>
            <person name="Quail M.A."/>
            <person name="Baker S."/>
            <person name="Bason N."/>
            <person name="Brooks K."/>
            <person name="Chillingworth T."/>
            <person name="Cronin A."/>
            <person name="Davis P."/>
            <person name="Dowd L."/>
            <person name="Fraser A."/>
            <person name="Feltwell T."/>
            <person name="Hance Z."/>
            <person name="Holroyd S."/>
            <person name="Jagels K."/>
            <person name="Moule S."/>
            <person name="Mungall K."/>
            <person name="Price C."/>
            <person name="Rabbinowitsch E."/>
            <person name="Sharp S."/>
            <person name="Simmonds M."/>
            <person name="Stevens K."/>
            <person name="Unwin L."/>
            <person name="Whithead S."/>
            <person name="Dupuy B."/>
            <person name="Dougan G."/>
            <person name="Barrell B."/>
            <person name="Parkhill J."/>
        </authorList>
    </citation>
    <scope>NUCLEOTIDE SEQUENCE [LARGE SCALE GENOMIC DNA]</scope>
    <source>
        <strain>630</strain>
    </source>
</reference>